<dbReference type="EMBL" id="CP000927">
    <property type="protein sequence ID" value="ABZ69888.1"/>
    <property type="molecule type" value="Genomic_DNA"/>
</dbReference>
<dbReference type="SMR" id="B0SUL0"/>
<dbReference type="STRING" id="366602.Caul_0757"/>
<dbReference type="KEGG" id="cak:Caul_0757"/>
<dbReference type="eggNOG" id="COG3220">
    <property type="taxonomic scope" value="Bacteria"/>
</dbReference>
<dbReference type="HOGENOM" id="CLU_064263_0_0_5"/>
<dbReference type="OrthoDB" id="9763101at2"/>
<dbReference type="Gene3D" id="3.20.20.150">
    <property type="entry name" value="Divalent-metal-dependent TIM barrel enzymes"/>
    <property type="match status" value="1"/>
</dbReference>
<dbReference type="HAMAP" id="MF_00697">
    <property type="entry name" value="UPF0276"/>
    <property type="match status" value="1"/>
</dbReference>
<dbReference type="InterPro" id="IPR007801">
    <property type="entry name" value="MbnB/TglH/ChrH"/>
</dbReference>
<dbReference type="InterPro" id="IPR036237">
    <property type="entry name" value="Xyl_isomerase-like_sf"/>
</dbReference>
<dbReference type="NCBIfam" id="NF003818">
    <property type="entry name" value="PRK05409.1"/>
    <property type="match status" value="1"/>
</dbReference>
<dbReference type="PANTHER" id="PTHR42194">
    <property type="entry name" value="UPF0276 PROTEIN HI_1600"/>
    <property type="match status" value="1"/>
</dbReference>
<dbReference type="PANTHER" id="PTHR42194:SF1">
    <property type="entry name" value="UPF0276 PROTEIN HI_1600"/>
    <property type="match status" value="1"/>
</dbReference>
<dbReference type="Pfam" id="PF05114">
    <property type="entry name" value="MbnB_TglH_ChrH"/>
    <property type="match status" value="1"/>
</dbReference>
<dbReference type="SUPFAM" id="SSF51658">
    <property type="entry name" value="Xylose isomerase-like"/>
    <property type="match status" value="1"/>
</dbReference>
<feature type="chain" id="PRO_1000083191" description="UPF0276 protein Caul_0757">
    <location>
        <begin position="1"/>
        <end position="276"/>
    </location>
</feature>
<reference key="1">
    <citation type="submission" date="2008-01" db="EMBL/GenBank/DDBJ databases">
        <title>Complete sequence of chromosome of Caulobacter sp. K31.</title>
        <authorList>
            <consortium name="US DOE Joint Genome Institute"/>
            <person name="Copeland A."/>
            <person name="Lucas S."/>
            <person name="Lapidus A."/>
            <person name="Barry K."/>
            <person name="Glavina del Rio T."/>
            <person name="Dalin E."/>
            <person name="Tice H."/>
            <person name="Pitluck S."/>
            <person name="Bruce D."/>
            <person name="Goodwin L."/>
            <person name="Thompson L.S."/>
            <person name="Brettin T."/>
            <person name="Detter J.C."/>
            <person name="Han C."/>
            <person name="Schmutz J."/>
            <person name="Larimer F."/>
            <person name="Land M."/>
            <person name="Hauser L."/>
            <person name="Kyrpides N."/>
            <person name="Kim E."/>
            <person name="Stephens C."/>
            <person name="Richardson P."/>
        </authorList>
    </citation>
    <scope>NUCLEOTIDE SEQUENCE [LARGE SCALE GENOMIC DNA]</scope>
    <source>
        <strain>K31</strain>
    </source>
</reference>
<name>Y757_CAUSK</name>
<evidence type="ECO:0000255" key="1">
    <source>
        <dbReference type="HAMAP-Rule" id="MF_00697"/>
    </source>
</evidence>
<accession>B0SUL0</accession>
<gene>
    <name type="ordered locus">Caul_0757</name>
</gene>
<organism>
    <name type="scientific">Caulobacter sp. (strain K31)</name>
    <dbReference type="NCBI Taxonomy" id="366602"/>
    <lineage>
        <taxon>Bacteria</taxon>
        <taxon>Pseudomonadati</taxon>
        <taxon>Pseudomonadota</taxon>
        <taxon>Alphaproteobacteria</taxon>
        <taxon>Caulobacterales</taxon>
        <taxon>Caulobacteraceae</taxon>
        <taxon>Caulobacter</taxon>
    </lineage>
</organism>
<proteinExistence type="inferred from homology"/>
<sequence length="276" mass="30096">MSPTAGLGLKSQHYAEALASDAEGLWFEVHPENYMAAGGPRLRWLEAIREKRSLSLHGVGLSLAADADPDPDHLAALKTLADRFEPFGVSEHLAWSTHRGAHQPDLLPFPRTRAALDRVARNIERMQDVLGRTILVENPSLYLPLTGHDLDETDFLIELTRRTGCGLLVDVNNVFVSASNLGYAAETYLDALPAEAIGEIHLAGHGPDEGGSALLIDTHGAPIAESVWALYQRLIERVGPRPTLIERDDDIPAFDVLMAERDRAHGMLTPSAASRL</sequence>
<comment type="similarity">
    <text evidence="1">Belongs to the UPF0276 family.</text>
</comment>
<protein>
    <recommendedName>
        <fullName evidence="1">UPF0276 protein Caul_0757</fullName>
    </recommendedName>
</protein>